<organism>
    <name type="scientific">Ranoidea aurea</name>
    <name type="common">Green and golden bell frog</name>
    <name type="synonym">Litoria aurea</name>
    <dbReference type="NCBI Taxonomy" id="8371"/>
    <lineage>
        <taxon>Eukaryota</taxon>
        <taxon>Metazoa</taxon>
        <taxon>Chordata</taxon>
        <taxon>Craniata</taxon>
        <taxon>Vertebrata</taxon>
        <taxon>Euteleostomi</taxon>
        <taxon>Amphibia</taxon>
        <taxon>Batrachia</taxon>
        <taxon>Anura</taxon>
        <taxon>Neobatrachia</taxon>
        <taxon>Hyloidea</taxon>
        <taxon>Hylidae</taxon>
        <taxon>Pelodryadinae</taxon>
        <taxon>Ranoidea</taxon>
    </lineage>
</organism>
<dbReference type="EMBL" id="AJ850128">
    <property type="protein sequence ID" value="CAH61712.1"/>
    <property type="molecule type" value="mRNA"/>
</dbReference>
<dbReference type="GO" id="GO:0005576">
    <property type="term" value="C:extracellular region"/>
    <property type="evidence" value="ECO:0007669"/>
    <property type="project" value="UniProtKB-SubCell"/>
</dbReference>
<dbReference type="GO" id="GO:0016020">
    <property type="term" value="C:membrane"/>
    <property type="evidence" value="ECO:0007669"/>
    <property type="project" value="UniProtKB-KW"/>
</dbReference>
<dbReference type="GO" id="GO:0044218">
    <property type="term" value="C:other organism cell membrane"/>
    <property type="evidence" value="ECO:0007669"/>
    <property type="project" value="UniProtKB-KW"/>
</dbReference>
<dbReference type="GO" id="GO:0042742">
    <property type="term" value="P:defense response to bacterium"/>
    <property type="evidence" value="ECO:0007669"/>
    <property type="project" value="UniProtKB-KW"/>
</dbReference>
<dbReference type="GO" id="GO:0045087">
    <property type="term" value="P:innate immune response"/>
    <property type="evidence" value="ECO:0007669"/>
    <property type="project" value="UniProtKB-KW"/>
</dbReference>
<dbReference type="InterPro" id="IPR004275">
    <property type="entry name" value="Frog_antimicrobial_propeptide"/>
</dbReference>
<dbReference type="InterPro" id="IPR016322">
    <property type="entry name" value="FSAP"/>
</dbReference>
<dbReference type="Pfam" id="PF03032">
    <property type="entry name" value="FSAP_sig_propep"/>
    <property type="match status" value="1"/>
</dbReference>
<dbReference type="PIRSF" id="PIRSF001822">
    <property type="entry name" value="Dermaseptin_precursor"/>
    <property type="match status" value="1"/>
</dbReference>
<accession>P82390</accession>
<accession>Q5K0E5</accession>
<evidence type="ECO:0000250" key="1">
    <source>
        <dbReference type="UniProtKB" id="P81835"/>
    </source>
</evidence>
<evidence type="ECO:0000255" key="2"/>
<evidence type="ECO:0000256" key="3">
    <source>
        <dbReference type="SAM" id="MobiDB-lite"/>
    </source>
</evidence>
<evidence type="ECO:0000269" key="4">
    <source>
    </source>
</evidence>
<evidence type="ECO:0000269" key="5">
    <source>
    </source>
</evidence>
<evidence type="ECO:0000269" key="6">
    <source>
    </source>
</evidence>
<evidence type="ECO:0000269" key="7">
    <source>
    </source>
</evidence>
<evidence type="ECO:0000303" key="8">
    <source>
    </source>
</evidence>
<evidence type="ECO:0000305" key="9"/>
<evidence type="ECO:0000305" key="10">
    <source>
    </source>
</evidence>
<evidence type="ECO:0000305" key="11">
    <source>
    </source>
</evidence>
<sequence>MAFLKKSLFLVLFLGLVSLSICEKEKRQNGEDEDENEAANHEEGSEEKRGLFDIVKKVVGAIGSLGKRNDVE</sequence>
<protein>
    <recommendedName>
        <fullName evidence="8">Aurein-2.3</fullName>
    </recommendedName>
</protein>
<proteinExistence type="evidence at protein level"/>
<name>AUR23_RANAE</name>
<reference key="1">
    <citation type="journal article" date="2005" name="Regul. Pept.">
        <title>The structural organization of aurein precursor cDNAs from the skin secretion of the Australian green and golden bell frog, Litoria aurea.</title>
        <authorList>
            <person name="Chen T."/>
            <person name="Xue Y."/>
            <person name="Zhou M."/>
            <person name="Shaw C."/>
        </authorList>
    </citation>
    <scope>NUCLEOTIDE SEQUENCE [MRNA]</scope>
    <scope>PROTEIN SEQUENCE OF 50-65</scope>
    <scope>MASS SPECTROMETRY</scope>
    <scope>SUBCELLULAR LOCATION</scope>
    <source>
        <tissue>Skin</tissue>
    </source>
</reference>
<reference key="2">
    <citation type="journal article" date="2000" name="Eur. J. Biochem.">
        <title>The antibiotic and anticancer active aurein peptides from the australian bell frogs Litoria aurea and Litoria raniformis the solution structure of aurein 1.2.</title>
        <authorList>
            <person name="Rozek T."/>
            <person name="Wegener K.L."/>
            <person name="Bowie J.H."/>
            <person name="Olver I.N."/>
            <person name="Carver J.A."/>
            <person name="Wallace J.C."/>
            <person name="Tyler M.J."/>
        </authorList>
    </citation>
    <scope>PROTEIN SEQUENCE OF 50-65</scope>
    <scope>FUNCTION</scope>
    <scope>AMIDATION AT LEU-65</scope>
    <scope>SUBCELLULAR LOCATION</scope>
    <source>
        <tissue>Skin secretion</tissue>
    </source>
</reference>
<reference key="3">
    <citation type="journal article" date="2002" name="Eur. J. Biochem.">
        <title>Amphibian peptides that inhibit neuronal nitric oxide synthase. Isolation of lesuerin from the skin secretion of the Australian stony creek frog Litoria lesueuri.</title>
        <authorList>
            <person name="Doyle J."/>
            <person name="Llewellyn L.E."/>
            <person name="Brinkworth C.S."/>
            <person name="Bowie J.H."/>
            <person name="Wegener K.L."/>
            <person name="Rozek T."/>
            <person name="Wabnitz P.A."/>
            <person name="Wallace J.C."/>
            <person name="Tyler M.J."/>
        </authorList>
    </citation>
    <scope>FUNCTION</scope>
</reference>
<reference key="4">
    <citation type="journal article" date="2007" name="Biophys. J.">
        <title>Characterization of the structure and membrane interaction of the antimicrobial peptides aurein 2.2 and 2.3 from Australian southern bell frogs.</title>
        <authorList>
            <person name="Pan Y.L."/>
            <person name="Cheng J.T."/>
            <person name="Hale J."/>
            <person name="Pan J."/>
            <person name="Hancock R.E."/>
            <person name="Straus S.K."/>
        </authorList>
    </citation>
    <scope>FUNCTION</scope>
    <scope>SUBCELLULAR LOCATION</scope>
    <scope>PTM</scope>
</reference>
<keyword id="KW-0027">Amidation</keyword>
<keyword id="KW-0878">Amphibian defense peptide</keyword>
<keyword id="KW-0044">Antibiotic</keyword>
<keyword id="KW-0929">Antimicrobial</keyword>
<keyword id="KW-0165">Cleavage on pair of basic residues</keyword>
<keyword id="KW-0903">Direct protein sequencing</keyword>
<keyword id="KW-0391">Immunity</keyword>
<keyword id="KW-0399">Innate immunity</keyword>
<keyword id="KW-0472">Membrane</keyword>
<keyword id="KW-0964">Secreted</keyword>
<keyword id="KW-0732">Signal</keyword>
<keyword id="KW-1052">Target cell membrane</keyword>
<keyword id="KW-1053">Target membrane</keyword>
<comment type="function">
    <text evidence="1 4 5 7">Amphipathic alpha-helical antimicrobial peptide with weak to moderate activity against Gram-positive bacteria, and no activity against Gram-negative bacteria (PubMed:10951191, PubMed:17259271). Probably acts by disturbing membrane functions with its amphipathic structure (PubMed:10951191). Strongly inhibits the formation of NO by neuronal nitric oxide synthase (nNOS) at micromolar concentrations (PubMed:11784303). Acts by a non-competitive mechanism, probably by binding to calcium/calmodulin and as a consequence blocking calmodulin attachment to nNOS (By similarity).</text>
</comment>
<comment type="subcellular location">
    <subcellularLocation>
        <location evidence="4 6">Secreted</location>
    </subcellularLocation>
    <subcellularLocation>
        <location evidence="7">Target cell membrane</location>
    </subcellularLocation>
</comment>
<comment type="tissue specificity">
    <text evidence="10 11">Expressed by the skin dorsal glands.</text>
</comment>
<comment type="PTM">
    <text evidence="7">Amidation is essential for antibacterial activity against Gram-positive bacteria.</text>
</comment>
<comment type="mass spectrometry"/>
<comment type="similarity">
    <text evidence="9">Belongs to the frog skin active peptide (FSAP) family. Aurein subfamily.</text>
</comment>
<comment type="online information" name="The antimicrobial peptide database">
    <link uri="https://wangapd3.com/database/query_output.php?ID=00016"/>
</comment>
<feature type="signal peptide" evidence="2">
    <location>
        <begin position="1"/>
        <end position="22"/>
    </location>
</feature>
<feature type="propeptide" id="PRO_0000450289" evidence="10">
    <location>
        <begin position="23"/>
        <end position="49"/>
    </location>
</feature>
<feature type="peptide" id="PRO_0000043720" description="Aurein-2.3" evidence="4 6">
    <location>
        <begin position="50"/>
        <end position="65"/>
    </location>
</feature>
<feature type="propeptide" id="PRO_0000450290" evidence="10">
    <location>
        <begin position="69"/>
        <end position="72"/>
    </location>
</feature>
<feature type="region of interest" description="Disordered" evidence="3">
    <location>
        <begin position="27"/>
        <end position="47"/>
    </location>
</feature>
<feature type="compositionally biased region" description="Basic and acidic residues" evidence="3">
    <location>
        <begin position="38"/>
        <end position="47"/>
    </location>
</feature>
<feature type="modified residue" description="Leucine amide" evidence="4">
    <location>
        <position position="65"/>
    </location>
</feature>